<feature type="initiator methionine" description="Removed">
    <location>
        <position position="1"/>
    </location>
</feature>
<feature type="chain" id="PRO_0000063829" description="Non-neuronal cytoplasmic intermediate filament protein">
    <location>
        <begin position="2"/>
        <end position="576"/>
    </location>
</feature>
<feature type="domain" description="IF rod" evidence="2">
    <location>
        <begin position="73"/>
        <end position="425"/>
    </location>
</feature>
<feature type="domain" description="LTD" evidence="1">
    <location>
        <begin position="456"/>
        <end position="574"/>
    </location>
</feature>
<feature type="region of interest" description="Disordered" evidence="3">
    <location>
        <begin position="1"/>
        <end position="51"/>
    </location>
</feature>
<feature type="region of interest" description="Head">
    <location>
        <begin position="2"/>
        <end position="75"/>
    </location>
</feature>
<feature type="region of interest" description="Coil 1A">
    <location>
        <begin position="76"/>
        <end position="108"/>
    </location>
</feature>
<feature type="region of interest" description="Linker 1">
    <location>
        <begin position="109"/>
        <end position="122"/>
    </location>
</feature>
<feature type="region of interest" description="Coil 1B">
    <location>
        <begin position="123"/>
        <end position="260"/>
    </location>
</feature>
<feature type="region of interest" description="Linker 2">
    <location>
        <begin position="261"/>
        <end position="278"/>
    </location>
</feature>
<feature type="region of interest" description="Coil 2">
    <location>
        <begin position="279"/>
        <end position="425"/>
    </location>
</feature>
<feature type="region of interest" description="Tail">
    <location>
        <begin position="426"/>
        <end position="576"/>
    </location>
</feature>
<feature type="compositionally biased region" description="Low complexity" evidence="3">
    <location>
        <begin position="28"/>
        <end position="49"/>
    </location>
</feature>
<feature type="splice variant" id="VSP_002474" description="In isoform B." evidence="4">
    <original>T</original>
    <variation>S</variation>
    <location>
        <position position="453"/>
    </location>
</feature>
<feature type="splice variant" id="VSP_002475" description="In isoform B." evidence="4">
    <location>
        <begin position="454"/>
        <end position="576"/>
    </location>
</feature>
<sequence length="576" mass="64479">MTSKISTTYEEEGRQSKIQPRAFVITRSGPSSKSSSFSARQSYASSRQSITPGVYQQLSSSGITDFRGTREKEKREMQNLNERLASYIEKVHFLDAQVKKLEAENEALRNRKSESLQPIRDAYENELAQARKVIDELSSTKGVSEAKVAGLQDEIASLRELIVTYENQSKDYRKKIESLGNQIGEYEGELHTLRIRCGSLEDENAKVRELLDKIQEQNRRLRADLDTETAAHIEADCLAQTKTEEAEFYKDLLDQLELLKPEPIQIKGMDYAEFWKSELSKCVREIQSAYDEKIDMIQQDTEAKYSAQLNSLRSGNVKDGMQLQHVQEEVKKLRTQAGEKNAMYAELAAKFASLQAERDSIGRQCSELERELEELRIKYNQDIGDLSNELSAVLAQLQILTDAKITMELEIACYRKLLEGEESRVGLRSLVEQAIGVQGRGTASLKDTIQQSTSSGSMTIQRSSKGPIAFNSVDQSGSNIVIENTTSGARAKTQSLRGWRIDKTVAGRVAASIQLKDYEIPPNTKYTIWAKGAKDRATADNEQIADIFSLGVGSCTWTIVDEAGNEKATLIAKFSG</sequence>
<dbReference type="EMBL" id="X55947">
    <property type="protein sequence ID" value="CAA39416.1"/>
    <property type="molecule type" value="Genomic_DNA"/>
</dbReference>
<dbReference type="EMBL" id="X55947">
    <property type="protein sequence ID" value="CAA39415.1"/>
    <property type="molecule type" value="Genomic_DNA"/>
</dbReference>
<dbReference type="PIR" id="S12277">
    <property type="entry name" value="S12277"/>
</dbReference>
<dbReference type="SMR" id="P22488"/>
<dbReference type="GO" id="GO:0005737">
    <property type="term" value="C:cytoplasm"/>
    <property type="evidence" value="ECO:0007669"/>
    <property type="project" value="UniProtKB-SubCell"/>
</dbReference>
<dbReference type="GO" id="GO:0005882">
    <property type="term" value="C:intermediate filament"/>
    <property type="evidence" value="ECO:0007669"/>
    <property type="project" value="UniProtKB-KW"/>
</dbReference>
<dbReference type="GO" id="GO:0005635">
    <property type="term" value="C:nuclear envelope"/>
    <property type="evidence" value="ECO:0007669"/>
    <property type="project" value="TreeGrafter"/>
</dbReference>
<dbReference type="GO" id="GO:0005652">
    <property type="term" value="C:nuclear lamina"/>
    <property type="evidence" value="ECO:0007669"/>
    <property type="project" value="TreeGrafter"/>
</dbReference>
<dbReference type="GO" id="GO:0005200">
    <property type="term" value="F:structural constituent of cytoskeleton"/>
    <property type="evidence" value="ECO:0007669"/>
    <property type="project" value="TreeGrafter"/>
</dbReference>
<dbReference type="GO" id="GO:0031507">
    <property type="term" value="P:heterochromatin formation"/>
    <property type="evidence" value="ECO:0007669"/>
    <property type="project" value="TreeGrafter"/>
</dbReference>
<dbReference type="GO" id="GO:0006998">
    <property type="term" value="P:nuclear envelope organization"/>
    <property type="evidence" value="ECO:0007669"/>
    <property type="project" value="TreeGrafter"/>
</dbReference>
<dbReference type="GO" id="GO:0007097">
    <property type="term" value="P:nuclear migration"/>
    <property type="evidence" value="ECO:0007669"/>
    <property type="project" value="TreeGrafter"/>
</dbReference>
<dbReference type="GO" id="GO:0051664">
    <property type="term" value="P:nuclear pore localization"/>
    <property type="evidence" value="ECO:0007669"/>
    <property type="project" value="TreeGrafter"/>
</dbReference>
<dbReference type="GO" id="GO:0090435">
    <property type="term" value="P:protein localization to nuclear envelope"/>
    <property type="evidence" value="ECO:0007669"/>
    <property type="project" value="TreeGrafter"/>
</dbReference>
<dbReference type="Gene3D" id="1.20.5.170">
    <property type="match status" value="1"/>
</dbReference>
<dbReference type="Gene3D" id="2.60.40.1260">
    <property type="entry name" value="Lamin Tail domain"/>
    <property type="match status" value="1"/>
</dbReference>
<dbReference type="Gene3D" id="1.20.5.1160">
    <property type="entry name" value="Vasodilator-stimulated phosphoprotein"/>
    <property type="match status" value="1"/>
</dbReference>
<dbReference type="InterPro" id="IPR018039">
    <property type="entry name" value="IF_conserved"/>
</dbReference>
<dbReference type="InterPro" id="IPR039008">
    <property type="entry name" value="IF_rod_dom"/>
</dbReference>
<dbReference type="InterPro" id="IPR016451">
    <property type="entry name" value="Intermed_filament_ifa/ifb"/>
</dbReference>
<dbReference type="InterPro" id="IPR001322">
    <property type="entry name" value="Lamin_tail_dom"/>
</dbReference>
<dbReference type="InterPro" id="IPR036415">
    <property type="entry name" value="Lamin_tail_dom_sf"/>
</dbReference>
<dbReference type="PANTHER" id="PTHR45721:SF12">
    <property type="entry name" value="INTERMEDIATE FILAMENT PROTEIN IFA-1"/>
    <property type="match status" value="1"/>
</dbReference>
<dbReference type="PANTHER" id="PTHR45721">
    <property type="entry name" value="LAMIN DM0-RELATED"/>
    <property type="match status" value="1"/>
</dbReference>
<dbReference type="Pfam" id="PF00038">
    <property type="entry name" value="Filament"/>
    <property type="match status" value="1"/>
</dbReference>
<dbReference type="PIRSF" id="PIRSF005546">
    <property type="entry name" value="Intermed_filamnt_Ifb-2"/>
    <property type="match status" value="1"/>
</dbReference>
<dbReference type="SMART" id="SM01391">
    <property type="entry name" value="Filament"/>
    <property type="match status" value="1"/>
</dbReference>
<dbReference type="SUPFAM" id="SSF64593">
    <property type="entry name" value="Intermediate filament protein, coiled coil region"/>
    <property type="match status" value="2"/>
</dbReference>
<dbReference type="SUPFAM" id="SSF74853">
    <property type="entry name" value="Lamin A/C globular tail domain"/>
    <property type="match status" value="1"/>
</dbReference>
<dbReference type="PROSITE" id="PS00226">
    <property type="entry name" value="IF_ROD_1"/>
    <property type="match status" value="1"/>
</dbReference>
<dbReference type="PROSITE" id="PS51842">
    <property type="entry name" value="IF_ROD_2"/>
    <property type="match status" value="1"/>
</dbReference>
<dbReference type="PROSITE" id="PS51841">
    <property type="entry name" value="LTD"/>
    <property type="match status" value="1"/>
</dbReference>
<reference key="1">
    <citation type="journal article" date="1990" name="EMBO J.">
        <title>Structure of an invertebrate gene encoding cytoplasmic intermediate filament (IF) proteins: implications for the origin and the diversification of IF proteins.</title>
        <authorList>
            <person name="Dodemont H."/>
            <person name="Riemer D."/>
            <person name="Weber K."/>
        </authorList>
    </citation>
    <scope>NUCLEOTIDE SEQUENCE [GENOMIC DNA] (ISOFORMS A AND B)</scope>
    <source>
        <tissue>Esophageal epithelium</tissue>
    </source>
</reference>
<name>IFEA_CORAP</name>
<evidence type="ECO:0000255" key="1">
    <source>
        <dbReference type="PROSITE-ProRule" id="PRU01187"/>
    </source>
</evidence>
<evidence type="ECO:0000255" key="2">
    <source>
        <dbReference type="PROSITE-ProRule" id="PRU01188"/>
    </source>
</evidence>
<evidence type="ECO:0000256" key="3">
    <source>
        <dbReference type="SAM" id="MobiDB-lite"/>
    </source>
</evidence>
<evidence type="ECO:0000305" key="4"/>
<organism>
    <name type="scientific">Cornu aspersum</name>
    <name type="common">Brown garden snail</name>
    <name type="synonym">Helix aspersa</name>
    <dbReference type="NCBI Taxonomy" id="6535"/>
    <lineage>
        <taxon>Eukaryota</taxon>
        <taxon>Metazoa</taxon>
        <taxon>Spiralia</taxon>
        <taxon>Lophotrochozoa</taxon>
        <taxon>Mollusca</taxon>
        <taxon>Gastropoda</taxon>
        <taxon>Heterobranchia</taxon>
        <taxon>Euthyneura</taxon>
        <taxon>Panpulmonata</taxon>
        <taxon>Eupulmonata</taxon>
        <taxon>Stylommatophora</taxon>
        <taxon>Helicina</taxon>
        <taxon>Helicoidea</taxon>
        <taxon>Helicidae</taxon>
        <taxon>Cornu</taxon>
        <taxon>Cornu</taxon>
    </lineage>
</organism>
<comment type="subunit">
    <text>Can form homopolymers.</text>
</comment>
<comment type="subcellular location">
    <subcellularLocation>
        <location>Cytoplasm</location>
    </subcellularLocation>
</comment>
<comment type="alternative products">
    <event type="alternative splicing"/>
    <isoform>
        <id>P22488-1</id>
        <name>A</name>
        <sequence type="displayed"/>
    </isoform>
    <isoform>
        <id>P22488-2</id>
        <name>B</name>
        <sequence type="described" ref="VSP_002474 VSP_002475"/>
    </isoform>
</comment>
<comment type="similarity">
    <text evidence="2">Belongs to the intermediate filament family.</text>
</comment>
<proteinExistence type="inferred from homology"/>
<protein>
    <recommendedName>
        <fullName>Non-neuronal cytoplasmic intermediate filament protein</fullName>
        <shortName>IF</shortName>
    </recommendedName>
</protein>
<accession>P22488</accession>
<accession>P22489</accession>
<keyword id="KW-0025">Alternative splicing</keyword>
<keyword id="KW-0175">Coiled coil</keyword>
<keyword id="KW-0963">Cytoplasm</keyword>
<keyword id="KW-0403">Intermediate filament</keyword>